<name>RL4_CLOBM</name>
<sequence length="206" mass="22854">MAKVDLFNQNGEKVGDLQLADSVFGVEVNTYAMHQVVKALLANKRQGTQSAKTRAEVSGGGIKPWRQKGTGRARQGSIRAPQWIHGGIVFAPKPRDYRMSIPKSMKKVAIKSALTSKVNENLMVVVDEIKLETPKTKEVVKMLNAFNAKKTLIITNNAEENVYKSARNIEGVQIIPVNNINVYDVLKYDKVIITKDAVSKIEEVYA</sequence>
<dbReference type="EMBL" id="CP000962">
    <property type="protein sequence ID" value="ACA54820.1"/>
    <property type="molecule type" value="Genomic_DNA"/>
</dbReference>
<dbReference type="RefSeq" id="WP_012342874.1">
    <property type="nucleotide sequence ID" value="NC_010520.1"/>
</dbReference>
<dbReference type="SMR" id="B1KSM4"/>
<dbReference type="KEGG" id="cbl:CLK_2923"/>
<dbReference type="HOGENOM" id="CLU_041575_5_2_9"/>
<dbReference type="GO" id="GO:1990904">
    <property type="term" value="C:ribonucleoprotein complex"/>
    <property type="evidence" value="ECO:0007669"/>
    <property type="project" value="UniProtKB-KW"/>
</dbReference>
<dbReference type="GO" id="GO:0005840">
    <property type="term" value="C:ribosome"/>
    <property type="evidence" value="ECO:0007669"/>
    <property type="project" value="UniProtKB-KW"/>
</dbReference>
<dbReference type="GO" id="GO:0019843">
    <property type="term" value="F:rRNA binding"/>
    <property type="evidence" value="ECO:0007669"/>
    <property type="project" value="UniProtKB-UniRule"/>
</dbReference>
<dbReference type="GO" id="GO:0003735">
    <property type="term" value="F:structural constituent of ribosome"/>
    <property type="evidence" value="ECO:0007669"/>
    <property type="project" value="InterPro"/>
</dbReference>
<dbReference type="GO" id="GO:0006412">
    <property type="term" value="P:translation"/>
    <property type="evidence" value="ECO:0007669"/>
    <property type="project" value="UniProtKB-UniRule"/>
</dbReference>
<dbReference type="FunFam" id="3.40.1370.10:FF:000003">
    <property type="entry name" value="50S ribosomal protein L4"/>
    <property type="match status" value="1"/>
</dbReference>
<dbReference type="Gene3D" id="3.40.1370.10">
    <property type="match status" value="1"/>
</dbReference>
<dbReference type="HAMAP" id="MF_01328_B">
    <property type="entry name" value="Ribosomal_uL4_B"/>
    <property type="match status" value="1"/>
</dbReference>
<dbReference type="InterPro" id="IPR002136">
    <property type="entry name" value="Ribosomal_uL4"/>
</dbReference>
<dbReference type="InterPro" id="IPR013005">
    <property type="entry name" value="Ribosomal_uL4-like"/>
</dbReference>
<dbReference type="InterPro" id="IPR023574">
    <property type="entry name" value="Ribosomal_uL4_dom_sf"/>
</dbReference>
<dbReference type="NCBIfam" id="TIGR03953">
    <property type="entry name" value="rplD_bact"/>
    <property type="match status" value="1"/>
</dbReference>
<dbReference type="PANTHER" id="PTHR10746">
    <property type="entry name" value="50S RIBOSOMAL PROTEIN L4"/>
    <property type="match status" value="1"/>
</dbReference>
<dbReference type="PANTHER" id="PTHR10746:SF6">
    <property type="entry name" value="LARGE RIBOSOMAL SUBUNIT PROTEIN UL4M"/>
    <property type="match status" value="1"/>
</dbReference>
<dbReference type="Pfam" id="PF00573">
    <property type="entry name" value="Ribosomal_L4"/>
    <property type="match status" value="1"/>
</dbReference>
<dbReference type="SUPFAM" id="SSF52166">
    <property type="entry name" value="Ribosomal protein L4"/>
    <property type="match status" value="1"/>
</dbReference>
<feature type="chain" id="PRO_1000142107" description="Large ribosomal subunit protein uL4">
    <location>
        <begin position="1"/>
        <end position="206"/>
    </location>
</feature>
<feature type="region of interest" description="Disordered" evidence="2">
    <location>
        <begin position="48"/>
        <end position="75"/>
    </location>
</feature>
<gene>
    <name evidence="1" type="primary">rplD</name>
    <name type="ordered locus">CLK_2923</name>
</gene>
<reference key="1">
    <citation type="journal article" date="2007" name="PLoS ONE">
        <title>Analysis of the neurotoxin complex genes in Clostridium botulinum A1-A4 and B1 strains: BoNT/A3, /Ba4 and /B1 clusters are located within plasmids.</title>
        <authorList>
            <person name="Smith T.J."/>
            <person name="Hill K.K."/>
            <person name="Foley B.T."/>
            <person name="Detter J.C."/>
            <person name="Munk A.C."/>
            <person name="Bruce D.C."/>
            <person name="Doggett N.A."/>
            <person name="Smith L.A."/>
            <person name="Marks J.D."/>
            <person name="Xie G."/>
            <person name="Brettin T.S."/>
        </authorList>
    </citation>
    <scope>NUCLEOTIDE SEQUENCE [LARGE SCALE GENOMIC DNA]</scope>
    <source>
        <strain>Loch Maree / Type A3</strain>
    </source>
</reference>
<comment type="function">
    <text evidence="1">One of the primary rRNA binding proteins, this protein initially binds near the 5'-end of the 23S rRNA. It is important during the early stages of 50S assembly. It makes multiple contacts with different domains of the 23S rRNA in the assembled 50S subunit and ribosome.</text>
</comment>
<comment type="function">
    <text evidence="1">Forms part of the polypeptide exit tunnel.</text>
</comment>
<comment type="subunit">
    <text evidence="1">Part of the 50S ribosomal subunit.</text>
</comment>
<comment type="similarity">
    <text evidence="1">Belongs to the universal ribosomal protein uL4 family.</text>
</comment>
<organism>
    <name type="scientific">Clostridium botulinum (strain Loch Maree / Type A3)</name>
    <dbReference type="NCBI Taxonomy" id="498214"/>
    <lineage>
        <taxon>Bacteria</taxon>
        <taxon>Bacillati</taxon>
        <taxon>Bacillota</taxon>
        <taxon>Clostridia</taxon>
        <taxon>Eubacteriales</taxon>
        <taxon>Clostridiaceae</taxon>
        <taxon>Clostridium</taxon>
    </lineage>
</organism>
<protein>
    <recommendedName>
        <fullName evidence="1">Large ribosomal subunit protein uL4</fullName>
    </recommendedName>
    <alternativeName>
        <fullName evidence="3">50S ribosomal protein L4</fullName>
    </alternativeName>
</protein>
<evidence type="ECO:0000255" key="1">
    <source>
        <dbReference type="HAMAP-Rule" id="MF_01328"/>
    </source>
</evidence>
<evidence type="ECO:0000256" key="2">
    <source>
        <dbReference type="SAM" id="MobiDB-lite"/>
    </source>
</evidence>
<evidence type="ECO:0000305" key="3"/>
<proteinExistence type="inferred from homology"/>
<accession>B1KSM4</accession>
<keyword id="KW-0687">Ribonucleoprotein</keyword>
<keyword id="KW-0689">Ribosomal protein</keyword>
<keyword id="KW-0694">RNA-binding</keyword>
<keyword id="KW-0699">rRNA-binding</keyword>